<name>KLP9_SCHPO</name>
<keyword id="KW-0067">ATP-binding</keyword>
<keyword id="KW-0175">Coiled coil</keyword>
<keyword id="KW-0963">Cytoplasm</keyword>
<keyword id="KW-0206">Cytoskeleton</keyword>
<keyword id="KW-0493">Microtubule</keyword>
<keyword id="KW-0505">Motor protein</keyword>
<keyword id="KW-0547">Nucleotide-binding</keyword>
<keyword id="KW-0539">Nucleus</keyword>
<keyword id="KW-0597">Phosphoprotein</keyword>
<keyword id="KW-1185">Reference proteome</keyword>
<sequence>MIQIFLRVKKAQPSSDASNKYGFLTVLNDYEILLESPEDSHAYRVSKSKTLEKASFTKVFPPSCTQLDVFSTICAPLIADSLVNMNDTLLFTLGVSGAGKTYTLFGPSDRPGVAFLALDALFYAIKGREASPQTVEFLRSQLEKCKIVEASKFLRGEAPLDIKVPNTEYYASHFPKIEEKNYQYAIYLSFAEIYNDRIFDLLEKASFFGHRHALSLKKSSTSDKKSIAGIQKVFVSNTTEAYKLIQKVLQLRKSTSTKSNSVSSRSHLIMSIELFKVCTKSNKFESCQIDLVDLAGSERTRSAETSGLLLREGASINRSLLTLGQCLEALRRKHEGKQHIIPFRQSKLTELLFHSGHLSGLAGINMLVNIDPFGSFDENAQVMRYSANAREILPPPLNENSGSQSPSHSLLQKSKNTSSTKALTSHLEQLQQENQQLRMLLADADSEMMNLEYEIRQQMTREMEERVSEVERTFLTKLLEESAQGIEYTDQKLEKMGGWMKKLQDENSEKTETIAQLEQIIEELHEELRSLEEESIKESSATQQNENQHKRSSRKLLYEDKQAIQEAHTINTKRKLWPQSTLIQAPNSDDEENVPSPSPKKKVVSPIKPLSPSRRPPLTSLYSGTTDIDINEL</sequence>
<gene>
    <name type="primary">klp9</name>
    <name type="ORF">SPBC15D4.01c</name>
    <name type="ORF">SPBC2D10.21c</name>
</gene>
<evidence type="ECO:0000255" key="1"/>
<evidence type="ECO:0000255" key="2">
    <source>
        <dbReference type="PROSITE-ProRule" id="PRU00283"/>
    </source>
</evidence>
<evidence type="ECO:0000256" key="3">
    <source>
        <dbReference type="SAM" id="MobiDB-lite"/>
    </source>
</evidence>
<evidence type="ECO:0000269" key="4">
    <source>
    </source>
</evidence>
<evidence type="ECO:0000269" key="5">
    <source>
    </source>
</evidence>
<organism>
    <name type="scientific">Schizosaccharomyces pombe (strain 972 / ATCC 24843)</name>
    <name type="common">Fission yeast</name>
    <dbReference type="NCBI Taxonomy" id="284812"/>
    <lineage>
        <taxon>Eukaryota</taxon>
        <taxon>Fungi</taxon>
        <taxon>Dikarya</taxon>
        <taxon>Ascomycota</taxon>
        <taxon>Taphrinomycotina</taxon>
        <taxon>Schizosaccharomycetes</taxon>
        <taxon>Schizosaccharomycetales</taxon>
        <taxon>Schizosaccharomycetaceae</taxon>
        <taxon>Schizosaccharomyces</taxon>
    </lineage>
</organism>
<proteinExistence type="evidence at protein level"/>
<reference key="1">
    <citation type="journal article" date="2002" name="Nature">
        <title>The genome sequence of Schizosaccharomyces pombe.</title>
        <authorList>
            <person name="Wood V."/>
            <person name="Gwilliam R."/>
            <person name="Rajandream M.A."/>
            <person name="Lyne M.H."/>
            <person name="Lyne R."/>
            <person name="Stewart A."/>
            <person name="Sgouros J.G."/>
            <person name="Peat N."/>
            <person name="Hayles J."/>
            <person name="Baker S.G."/>
            <person name="Basham D."/>
            <person name="Bowman S."/>
            <person name="Brooks K."/>
            <person name="Brown D."/>
            <person name="Brown S."/>
            <person name="Chillingworth T."/>
            <person name="Churcher C.M."/>
            <person name="Collins M."/>
            <person name="Connor R."/>
            <person name="Cronin A."/>
            <person name="Davis P."/>
            <person name="Feltwell T."/>
            <person name="Fraser A."/>
            <person name="Gentles S."/>
            <person name="Goble A."/>
            <person name="Hamlin N."/>
            <person name="Harris D.E."/>
            <person name="Hidalgo J."/>
            <person name="Hodgson G."/>
            <person name="Holroyd S."/>
            <person name="Hornsby T."/>
            <person name="Howarth S."/>
            <person name="Huckle E.J."/>
            <person name="Hunt S."/>
            <person name="Jagels K."/>
            <person name="James K.D."/>
            <person name="Jones L."/>
            <person name="Jones M."/>
            <person name="Leather S."/>
            <person name="McDonald S."/>
            <person name="McLean J."/>
            <person name="Mooney P."/>
            <person name="Moule S."/>
            <person name="Mungall K.L."/>
            <person name="Murphy L.D."/>
            <person name="Niblett D."/>
            <person name="Odell C."/>
            <person name="Oliver K."/>
            <person name="O'Neil S."/>
            <person name="Pearson D."/>
            <person name="Quail M.A."/>
            <person name="Rabbinowitsch E."/>
            <person name="Rutherford K.M."/>
            <person name="Rutter S."/>
            <person name="Saunders D."/>
            <person name="Seeger K."/>
            <person name="Sharp S."/>
            <person name="Skelton J."/>
            <person name="Simmonds M.N."/>
            <person name="Squares R."/>
            <person name="Squares S."/>
            <person name="Stevens K."/>
            <person name="Taylor K."/>
            <person name="Taylor R.G."/>
            <person name="Tivey A."/>
            <person name="Walsh S.V."/>
            <person name="Warren T."/>
            <person name="Whitehead S."/>
            <person name="Woodward J.R."/>
            <person name="Volckaert G."/>
            <person name="Aert R."/>
            <person name="Robben J."/>
            <person name="Grymonprez B."/>
            <person name="Weltjens I."/>
            <person name="Vanstreels E."/>
            <person name="Rieger M."/>
            <person name="Schaefer M."/>
            <person name="Mueller-Auer S."/>
            <person name="Gabel C."/>
            <person name="Fuchs M."/>
            <person name="Duesterhoeft A."/>
            <person name="Fritzc C."/>
            <person name="Holzer E."/>
            <person name="Moestl D."/>
            <person name="Hilbert H."/>
            <person name="Borzym K."/>
            <person name="Langer I."/>
            <person name="Beck A."/>
            <person name="Lehrach H."/>
            <person name="Reinhardt R."/>
            <person name="Pohl T.M."/>
            <person name="Eger P."/>
            <person name="Zimmermann W."/>
            <person name="Wedler H."/>
            <person name="Wambutt R."/>
            <person name="Purnelle B."/>
            <person name="Goffeau A."/>
            <person name="Cadieu E."/>
            <person name="Dreano S."/>
            <person name="Gloux S."/>
            <person name="Lelaure V."/>
            <person name="Mottier S."/>
            <person name="Galibert F."/>
            <person name="Aves S.J."/>
            <person name="Xiang Z."/>
            <person name="Hunt C."/>
            <person name="Moore K."/>
            <person name="Hurst S.M."/>
            <person name="Lucas M."/>
            <person name="Rochet M."/>
            <person name="Gaillardin C."/>
            <person name="Tallada V.A."/>
            <person name="Garzon A."/>
            <person name="Thode G."/>
            <person name="Daga R.R."/>
            <person name="Cruzado L."/>
            <person name="Jimenez J."/>
            <person name="Sanchez M."/>
            <person name="del Rey F."/>
            <person name="Benito J."/>
            <person name="Dominguez A."/>
            <person name="Revuelta J.L."/>
            <person name="Moreno S."/>
            <person name="Armstrong J."/>
            <person name="Forsburg S.L."/>
            <person name="Cerutti L."/>
            <person name="Lowe T."/>
            <person name="McCombie W.R."/>
            <person name="Paulsen I."/>
            <person name="Potashkin J."/>
            <person name="Shpakovski G.V."/>
            <person name="Ussery D."/>
            <person name="Barrell B.G."/>
            <person name="Nurse P."/>
        </authorList>
    </citation>
    <scope>NUCLEOTIDE SEQUENCE [LARGE SCALE GENOMIC DNA]</scope>
    <source>
        <strain>972 / ATCC 24843</strain>
    </source>
</reference>
<reference key="2">
    <citation type="journal article" date="2006" name="Nat. Biotechnol.">
        <title>ORFeome cloning and global analysis of protein localization in the fission yeast Schizosaccharomyces pombe.</title>
        <authorList>
            <person name="Matsuyama A."/>
            <person name="Arai R."/>
            <person name="Yashiroda Y."/>
            <person name="Shirai A."/>
            <person name="Kamata A."/>
            <person name="Sekido S."/>
            <person name="Kobayashi Y."/>
            <person name="Hashimoto A."/>
            <person name="Hamamoto M."/>
            <person name="Hiraoka Y."/>
            <person name="Horinouchi S."/>
            <person name="Yoshida M."/>
        </authorList>
    </citation>
    <scope>SUBCELLULAR LOCATION [LARGE SCALE ANALYSIS]</scope>
</reference>
<reference key="3">
    <citation type="journal article" date="2008" name="J. Proteome Res.">
        <title>Phosphoproteome analysis of fission yeast.</title>
        <authorList>
            <person name="Wilson-Grady J.T."/>
            <person name="Villen J."/>
            <person name="Gygi S.P."/>
        </authorList>
    </citation>
    <scope>PHOSPHORYLATION [LARGE SCALE ANALYSIS] AT SER-605; SER-611 AND SER-613</scope>
    <scope>IDENTIFICATION BY MASS SPECTROMETRY</scope>
</reference>
<reference key="4">
    <citation type="journal article" date="2009" name="Dev. Cell">
        <title>Phospho-regulated interaction between kinesin-6 Klp9p and microtubule bundler Ase1p promotes spindle elongation.</title>
        <authorList>
            <person name="Fu C."/>
            <person name="Ward J.J."/>
            <person name="Loiodice I."/>
            <person name="Velve-Casquillas G."/>
            <person name="Nedelec F.J."/>
            <person name="Tran P.T."/>
        </authorList>
    </citation>
    <scope>FUNCTION</scope>
    <scope>SUBCELLULAR LOCATION</scope>
    <scope>PHOSPHORYLATION</scope>
    <scope>INTERACTION WITH ASE1</scope>
</reference>
<dbReference type="EMBL" id="CU329671">
    <property type="protein sequence ID" value="CAA21179.2"/>
    <property type="molecule type" value="Genomic_DNA"/>
</dbReference>
<dbReference type="RefSeq" id="XP_001713140.1">
    <property type="nucleotide sequence ID" value="XM_001713088.2"/>
</dbReference>
<dbReference type="SMR" id="Q1MTQ7"/>
<dbReference type="BioGRID" id="276328">
    <property type="interactions" value="10"/>
</dbReference>
<dbReference type="FunCoup" id="Q1MTQ7">
    <property type="interactions" value="183"/>
</dbReference>
<dbReference type="STRING" id="284812.Q1MTQ7"/>
<dbReference type="iPTMnet" id="Q1MTQ7"/>
<dbReference type="PaxDb" id="4896-SPBC15D4.01c.1"/>
<dbReference type="EnsemblFungi" id="SPBC15D4.01c.1">
    <property type="protein sequence ID" value="SPBC15D4.01c.1:pep"/>
    <property type="gene ID" value="SPBC15D4.01c"/>
</dbReference>
<dbReference type="PomBase" id="SPBC15D4.01c">
    <property type="gene designation" value="klp9"/>
</dbReference>
<dbReference type="VEuPathDB" id="FungiDB:SPBC15D4.01c"/>
<dbReference type="eggNOG" id="KOG0242">
    <property type="taxonomic scope" value="Eukaryota"/>
</dbReference>
<dbReference type="HOGENOM" id="CLU_429034_0_0_1"/>
<dbReference type="InParanoid" id="Q1MTQ7"/>
<dbReference type="OMA" id="NRHPQKA"/>
<dbReference type="PhylomeDB" id="Q1MTQ7"/>
<dbReference type="PRO" id="PR:Q1MTQ7"/>
<dbReference type="Proteomes" id="UP000002485">
    <property type="component" value="Chromosome II"/>
</dbReference>
<dbReference type="GO" id="GO:0005737">
    <property type="term" value="C:cytoplasm"/>
    <property type="evidence" value="ECO:0000318"/>
    <property type="project" value="GO_Central"/>
</dbReference>
<dbReference type="GO" id="GO:0005871">
    <property type="term" value="C:kinesin complex"/>
    <property type="evidence" value="ECO:0000318"/>
    <property type="project" value="GO_Central"/>
</dbReference>
<dbReference type="GO" id="GO:1990385">
    <property type="term" value="C:meiotic spindle midzone"/>
    <property type="evidence" value="ECO:0000269"/>
    <property type="project" value="PomBase"/>
</dbReference>
<dbReference type="GO" id="GO:0005874">
    <property type="term" value="C:microtubule"/>
    <property type="evidence" value="ECO:0000318"/>
    <property type="project" value="GO_Central"/>
</dbReference>
<dbReference type="GO" id="GO:1990023">
    <property type="term" value="C:mitotic spindle midzone"/>
    <property type="evidence" value="ECO:0000314"/>
    <property type="project" value="PomBase"/>
</dbReference>
<dbReference type="GO" id="GO:0005654">
    <property type="term" value="C:nucleoplasm"/>
    <property type="evidence" value="ECO:0000314"/>
    <property type="project" value="PomBase"/>
</dbReference>
<dbReference type="GO" id="GO:0005634">
    <property type="term" value="C:nucleus"/>
    <property type="evidence" value="ECO:0007005"/>
    <property type="project" value="PomBase"/>
</dbReference>
<dbReference type="GO" id="GO:1990295">
    <property type="term" value="C:post-anaphase microtubule array"/>
    <property type="evidence" value="ECO:0000314"/>
    <property type="project" value="PomBase"/>
</dbReference>
<dbReference type="GO" id="GO:0005816">
    <property type="term" value="C:spindle pole body"/>
    <property type="evidence" value="ECO:0007669"/>
    <property type="project" value="UniProtKB-SubCell"/>
</dbReference>
<dbReference type="GO" id="GO:0005524">
    <property type="term" value="F:ATP binding"/>
    <property type="evidence" value="ECO:0000255"/>
    <property type="project" value="PomBase"/>
</dbReference>
<dbReference type="GO" id="GO:0016887">
    <property type="term" value="F:ATP hydrolysis activity"/>
    <property type="evidence" value="ECO:0000318"/>
    <property type="project" value="GO_Central"/>
</dbReference>
<dbReference type="GO" id="GO:0008017">
    <property type="term" value="F:microtubule binding"/>
    <property type="evidence" value="ECO:0000318"/>
    <property type="project" value="GO_Central"/>
</dbReference>
<dbReference type="GO" id="GO:0003777">
    <property type="term" value="F:microtubule motor activity"/>
    <property type="evidence" value="ECO:0000315"/>
    <property type="project" value="PomBase"/>
</dbReference>
<dbReference type="GO" id="GO:0008574">
    <property type="term" value="F:plus-end-directed microtubule motor activity"/>
    <property type="evidence" value="ECO:0000314"/>
    <property type="project" value="PomBase"/>
</dbReference>
<dbReference type="GO" id="GO:0007018">
    <property type="term" value="P:microtubule-based movement"/>
    <property type="evidence" value="ECO:0000318"/>
    <property type="project" value="GO_Central"/>
</dbReference>
<dbReference type="GO" id="GO:1990758">
    <property type="term" value="P:mitotic sister chromatid biorientation"/>
    <property type="evidence" value="ECO:0000316"/>
    <property type="project" value="PomBase"/>
</dbReference>
<dbReference type="GO" id="GO:0000022">
    <property type="term" value="P:mitotic spindle elongation"/>
    <property type="evidence" value="ECO:0000315"/>
    <property type="project" value="PomBase"/>
</dbReference>
<dbReference type="GO" id="GO:0061805">
    <property type="term" value="P:mitotic spindle elongation (spindle phase three)"/>
    <property type="evidence" value="ECO:0000315"/>
    <property type="project" value="PomBase"/>
</dbReference>
<dbReference type="Gene3D" id="3.40.850.10">
    <property type="entry name" value="Kinesin motor domain"/>
    <property type="match status" value="1"/>
</dbReference>
<dbReference type="InterPro" id="IPR027640">
    <property type="entry name" value="Kinesin-like_fam"/>
</dbReference>
<dbReference type="InterPro" id="IPR001752">
    <property type="entry name" value="Kinesin_motor_dom"/>
</dbReference>
<dbReference type="InterPro" id="IPR036961">
    <property type="entry name" value="Kinesin_motor_dom_sf"/>
</dbReference>
<dbReference type="InterPro" id="IPR027417">
    <property type="entry name" value="P-loop_NTPase"/>
</dbReference>
<dbReference type="PANTHER" id="PTHR24115:SF1008">
    <property type="entry name" value="KINESIN-LIKE PROTEIN SUBITO"/>
    <property type="match status" value="1"/>
</dbReference>
<dbReference type="PANTHER" id="PTHR24115">
    <property type="entry name" value="KINESIN-RELATED"/>
    <property type="match status" value="1"/>
</dbReference>
<dbReference type="Pfam" id="PF00225">
    <property type="entry name" value="Kinesin"/>
    <property type="match status" value="1"/>
</dbReference>
<dbReference type="PRINTS" id="PR00380">
    <property type="entry name" value="KINESINHEAVY"/>
</dbReference>
<dbReference type="SMART" id="SM00129">
    <property type="entry name" value="KISc"/>
    <property type="match status" value="1"/>
</dbReference>
<dbReference type="SUPFAM" id="SSF52540">
    <property type="entry name" value="P-loop containing nucleoside triphosphate hydrolases"/>
    <property type="match status" value="1"/>
</dbReference>
<dbReference type="PROSITE" id="PS50067">
    <property type="entry name" value="KINESIN_MOTOR_2"/>
    <property type="match status" value="1"/>
</dbReference>
<comment type="function">
    <text evidence="5">Kinesin-like motor protein involved in anaphase B spindle elongation.</text>
</comment>
<comment type="subunit">
    <text evidence="5">Interacts with ase1.</text>
</comment>
<comment type="subcellular location">
    <subcellularLocation>
        <location>Nucleus</location>
    </subcellularLocation>
    <subcellularLocation>
        <location>Cytoplasm</location>
        <location>Cytoskeleton</location>
        <location>Microtubule organizing center</location>
        <location>Spindle pole body</location>
    </subcellularLocation>
    <subcellularLocation>
        <location>Cytoplasm</location>
        <location>Cytoskeleton</location>
    </subcellularLocation>
</comment>
<comment type="PTM">
    <text evidence="4 5">Phosphorylated by cdc2 and dephosphorylated by clp1. Dephosphorylation is required for the interaction with ase1.</text>
</comment>
<comment type="similarity">
    <text evidence="2">Belongs to the TRAFAC class myosin-kinesin ATPase superfamily. Kinesin family.</text>
</comment>
<feature type="chain" id="PRO_0000353837" description="Kinesin-like motor protein 9">
    <location>
        <begin position="1"/>
        <end position="633"/>
    </location>
</feature>
<feature type="domain" description="Kinesin motor" evidence="2">
    <location>
        <begin position="1"/>
        <end position="392"/>
    </location>
</feature>
<feature type="region of interest" description="Disordered" evidence="3">
    <location>
        <begin position="393"/>
        <end position="423"/>
    </location>
</feature>
<feature type="region of interest" description="Disordered" evidence="3">
    <location>
        <begin position="531"/>
        <end position="556"/>
    </location>
</feature>
<feature type="region of interest" description="Disordered" evidence="3">
    <location>
        <begin position="575"/>
        <end position="633"/>
    </location>
</feature>
<feature type="coiled-coil region" evidence="1">
    <location>
        <begin position="417"/>
        <end position="541"/>
    </location>
</feature>
<feature type="compositionally biased region" description="Polar residues" evidence="3">
    <location>
        <begin position="398"/>
        <end position="423"/>
    </location>
</feature>
<feature type="compositionally biased region" description="Polar residues" evidence="3">
    <location>
        <begin position="578"/>
        <end position="587"/>
    </location>
</feature>
<feature type="compositionally biased region" description="Low complexity" evidence="3">
    <location>
        <begin position="604"/>
        <end position="623"/>
    </location>
</feature>
<feature type="compositionally biased region" description="Polar residues" evidence="3">
    <location>
        <begin position="624"/>
        <end position="633"/>
    </location>
</feature>
<feature type="binding site" evidence="2">
    <location>
        <begin position="94"/>
        <end position="101"/>
    </location>
    <ligand>
        <name>ATP</name>
        <dbReference type="ChEBI" id="CHEBI:30616"/>
    </ligand>
</feature>
<feature type="modified residue" description="Phosphoserine" evidence="4">
    <location>
        <position position="605"/>
    </location>
</feature>
<feature type="modified residue" description="Phosphoserine" evidence="4">
    <location>
        <position position="611"/>
    </location>
</feature>
<feature type="modified residue" description="Phosphoserine" evidence="4">
    <location>
        <position position="613"/>
    </location>
</feature>
<accession>Q1MTQ7</accession>
<protein>
    <recommendedName>
        <fullName>Kinesin-like motor protein 9</fullName>
    </recommendedName>
</protein>